<gene>
    <name evidence="1" type="primary">rpsN</name>
    <name type="ordered locus">Ecaj_0599</name>
</gene>
<feature type="chain" id="PRO_1000128395" description="Small ribosomal subunit protein uS14">
    <location>
        <begin position="1"/>
        <end position="101"/>
    </location>
</feature>
<comment type="function">
    <text evidence="1">Binds 16S rRNA, required for the assembly of 30S particles and may also be responsible for determining the conformation of the 16S rRNA at the A site.</text>
</comment>
<comment type="subunit">
    <text evidence="1">Part of the 30S ribosomal subunit. Contacts proteins S3 and S10.</text>
</comment>
<comment type="similarity">
    <text evidence="1">Belongs to the universal ribosomal protein uS14 family.</text>
</comment>
<reference key="1">
    <citation type="journal article" date="2006" name="J. Bacteriol.">
        <title>The genome of the obligately intracellular bacterium Ehrlichia canis reveals themes of complex membrane structure and immune evasion strategies.</title>
        <authorList>
            <person name="Mavromatis K."/>
            <person name="Doyle C.K."/>
            <person name="Lykidis A."/>
            <person name="Ivanova N."/>
            <person name="Francino M.P."/>
            <person name="Chain P."/>
            <person name="Shin M."/>
            <person name="Malfatti S."/>
            <person name="Larimer F."/>
            <person name="Copeland A."/>
            <person name="Detter J.C."/>
            <person name="Land M."/>
            <person name="Richardson P.M."/>
            <person name="Yu X.J."/>
            <person name="Walker D.H."/>
            <person name="McBride J.W."/>
            <person name="Kyrpides N.C."/>
        </authorList>
    </citation>
    <scope>NUCLEOTIDE SEQUENCE [LARGE SCALE GENOMIC DNA]</scope>
    <source>
        <strain>Jake</strain>
    </source>
</reference>
<name>RS14_EHRCJ</name>
<dbReference type="EMBL" id="CP000107">
    <property type="protein sequence ID" value="AAZ68633.1"/>
    <property type="molecule type" value="Genomic_DNA"/>
</dbReference>
<dbReference type="RefSeq" id="WP_011304711.1">
    <property type="nucleotide sequence ID" value="NC_007354.1"/>
</dbReference>
<dbReference type="SMR" id="Q3YRM2"/>
<dbReference type="FunCoup" id="Q3YRM2">
    <property type="interactions" value="318"/>
</dbReference>
<dbReference type="STRING" id="269484.Ecaj_0599"/>
<dbReference type="KEGG" id="ecn:Ecaj_0599"/>
<dbReference type="eggNOG" id="COG0199">
    <property type="taxonomic scope" value="Bacteria"/>
</dbReference>
<dbReference type="HOGENOM" id="CLU_139869_0_1_5"/>
<dbReference type="InParanoid" id="Q3YRM2"/>
<dbReference type="Proteomes" id="UP000000435">
    <property type="component" value="Chromosome"/>
</dbReference>
<dbReference type="GO" id="GO:0005737">
    <property type="term" value="C:cytoplasm"/>
    <property type="evidence" value="ECO:0007669"/>
    <property type="project" value="UniProtKB-ARBA"/>
</dbReference>
<dbReference type="GO" id="GO:0015935">
    <property type="term" value="C:small ribosomal subunit"/>
    <property type="evidence" value="ECO:0007669"/>
    <property type="project" value="TreeGrafter"/>
</dbReference>
<dbReference type="GO" id="GO:0019843">
    <property type="term" value="F:rRNA binding"/>
    <property type="evidence" value="ECO:0007669"/>
    <property type="project" value="UniProtKB-UniRule"/>
</dbReference>
<dbReference type="GO" id="GO:0003735">
    <property type="term" value="F:structural constituent of ribosome"/>
    <property type="evidence" value="ECO:0007669"/>
    <property type="project" value="InterPro"/>
</dbReference>
<dbReference type="GO" id="GO:0006412">
    <property type="term" value="P:translation"/>
    <property type="evidence" value="ECO:0007669"/>
    <property type="project" value="UniProtKB-UniRule"/>
</dbReference>
<dbReference type="FunFam" id="1.10.287.1480:FF:000001">
    <property type="entry name" value="30S ribosomal protein S14"/>
    <property type="match status" value="1"/>
</dbReference>
<dbReference type="Gene3D" id="1.10.287.1480">
    <property type="match status" value="1"/>
</dbReference>
<dbReference type="HAMAP" id="MF_00537">
    <property type="entry name" value="Ribosomal_uS14_1"/>
    <property type="match status" value="1"/>
</dbReference>
<dbReference type="InterPro" id="IPR001209">
    <property type="entry name" value="Ribosomal_uS14"/>
</dbReference>
<dbReference type="InterPro" id="IPR023036">
    <property type="entry name" value="Ribosomal_uS14_bac/plastid"/>
</dbReference>
<dbReference type="InterPro" id="IPR018271">
    <property type="entry name" value="Ribosomal_uS14_CS"/>
</dbReference>
<dbReference type="NCBIfam" id="NF006477">
    <property type="entry name" value="PRK08881.1"/>
    <property type="match status" value="1"/>
</dbReference>
<dbReference type="PANTHER" id="PTHR19836">
    <property type="entry name" value="30S RIBOSOMAL PROTEIN S14"/>
    <property type="match status" value="1"/>
</dbReference>
<dbReference type="PANTHER" id="PTHR19836:SF19">
    <property type="entry name" value="SMALL RIBOSOMAL SUBUNIT PROTEIN US14M"/>
    <property type="match status" value="1"/>
</dbReference>
<dbReference type="Pfam" id="PF00253">
    <property type="entry name" value="Ribosomal_S14"/>
    <property type="match status" value="1"/>
</dbReference>
<dbReference type="SUPFAM" id="SSF57716">
    <property type="entry name" value="Glucocorticoid receptor-like (DNA-binding domain)"/>
    <property type="match status" value="1"/>
</dbReference>
<dbReference type="PROSITE" id="PS00527">
    <property type="entry name" value="RIBOSOMAL_S14"/>
    <property type="match status" value="1"/>
</dbReference>
<sequence>MSRKSVIQRNLKRISICSRLKSKRDELKAIIKDQSISMNDRFLAQVKLSKLPRDSSYIRIRNRCLVTGRPRGCYRKFKVSRIVLRQLGSIGQIPGLTKSSW</sequence>
<accession>Q3YRM2</accession>
<keyword id="KW-0687">Ribonucleoprotein</keyword>
<keyword id="KW-0689">Ribosomal protein</keyword>
<keyword id="KW-0694">RNA-binding</keyword>
<keyword id="KW-0699">rRNA-binding</keyword>
<protein>
    <recommendedName>
        <fullName evidence="1">Small ribosomal subunit protein uS14</fullName>
    </recommendedName>
    <alternativeName>
        <fullName evidence="2">30S ribosomal protein S14</fullName>
    </alternativeName>
</protein>
<evidence type="ECO:0000255" key="1">
    <source>
        <dbReference type="HAMAP-Rule" id="MF_00537"/>
    </source>
</evidence>
<evidence type="ECO:0000305" key="2"/>
<organism>
    <name type="scientific">Ehrlichia canis (strain Jake)</name>
    <dbReference type="NCBI Taxonomy" id="269484"/>
    <lineage>
        <taxon>Bacteria</taxon>
        <taxon>Pseudomonadati</taxon>
        <taxon>Pseudomonadota</taxon>
        <taxon>Alphaproteobacteria</taxon>
        <taxon>Rickettsiales</taxon>
        <taxon>Anaplasmataceae</taxon>
        <taxon>Ehrlichia</taxon>
    </lineage>
</organism>
<proteinExistence type="inferred from homology"/>